<keyword id="KW-0004">4Fe-4S</keyword>
<keyword id="KW-0028">Amino-acid biosynthesis</keyword>
<keyword id="KW-0100">Branched-chain amino acid biosynthesis</keyword>
<keyword id="KW-0408">Iron</keyword>
<keyword id="KW-0411">Iron-sulfur</keyword>
<keyword id="KW-0432">Leucine biosynthesis</keyword>
<keyword id="KW-0456">Lyase</keyword>
<keyword id="KW-0479">Metal-binding</keyword>
<protein>
    <recommendedName>
        <fullName evidence="1">3-isopropylmalate dehydratase large subunit</fullName>
        <ecNumber evidence="1">4.2.1.33</ecNumber>
    </recommendedName>
    <alternativeName>
        <fullName evidence="1">Alpha-IPM isomerase</fullName>
        <shortName evidence="1">IPMI</shortName>
    </alternativeName>
    <alternativeName>
        <fullName evidence="1">Isopropylmalate isomerase</fullName>
    </alternativeName>
</protein>
<name>LEUC_CAMJ8</name>
<reference key="1">
    <citation type="journal article" date="2007" name="J. Bacteriol.">
        <title>The complete genome sequence of Campylobacter jejuni strain 81116 (NCTC11828).</title>
        <authorList>
            <person name="Pearson B.M."/>
            <person name="Gaskin D.J.H."/>
            <person name="Segers R.P.A.M."/>
            <person name="Wells J.M."/>
            <person name="Nuijten P.J.M."/>
            <person name="van Vliet A.H.M."/>
        </authorList>
    </citation>
    <scope>NUCLEOTIDE SEQUENCE [LARGE SCALE GENOMIC DNA]</scope>
    <source>
        <strain>81116 / NCTC 11828</strain>
    </source>
</reference>
<proteinExistence type="inferred from homology"/>
<gene>
    <name evidence="1" type="primary">leuC</name>
    <name type="ordered locus">C8J_1623</name>
</gene>
<comment type="function">
    <text evidence="1">Catalyzes the isomerization between 2-isopropylmalate and 3-isopropylmalate, via the formation of 2-isopropylmaleate.</text>
</comment>
<comment type="catalytic activity">
    <reaction evidence="1">
        <text>(2R,3S)-3-isopropylmalate = (2S)-2-isopropylmalate</text>
        <dbReference type="Rhea" id="RHEA:32287"/>
        <dbReference type="ChEBI" id="CHEBI:1178"/>
        <dbReference type="ChEBI" id="CHEBI:35121"/>
        <dbReference type="EC" id="4.2.1.33"/>
    </reaction>
</comment>
<comment type="cofactor">
    <cofactor evidence="1">
        <name>[4Fe-4S] cluster</name>
        <dbReference type="ChEBI" id="CHEBI:49883"/>
    </cofactor>
    <text evidence="1">Binds 1 [4Fe-4S] cluster per subunit.</text>
</comment>
<comment type="pathway">
    <text evidence="1">Amino-acid biosynthesis; L-leucine biosynthesis; L-leucine from 3-methyl-2-oxobutanoate: step 2/4.</text>
</comment>
<comment type="subunit">
    <text evidence="1">Heterodimer of LeuC and LeuD.</text>
</comment>
<comment type="similarity">
    <text evidence="1">Belongs to the aconitase/IPM isomerase family. LeuC type 1 subfamily.</text>
</comment>
<sequence>MAKTLYEKVFDAHVVYEGKNELPILYIDRHLIHEVTSPQAFSGLKMAKRRMARADLTLATIDHDVSTKSIDLNACSDMAKEQITTLMQNTKEFGVRLLGLGDKNQGIVHIVGPELGFTLPGVTLVCGDSHTATHGAFGALAFGIGTSEVEHVMATQTLKQAKLKTMKIECKGQFQKGVYAKDLILYLIAQYGTAKGTGYAIEFCGELIRKLSMEARMTLCNMAIEFGAKVGMIAPDEITFEYIKGKEFAPKGEEFQKYCEYWKSLRSDEGAKYDESITLDVSKIKPQISYGTNPSQVIGIDEKIPKISDFKNQSEQKSLLDALSYVNLEQDQVIEGVKIDIVFIGSCTNGRLEDLKIAADILKGHKIHKNVKALIVPGSMQVRKEAENLGLDKIFIEAGCEWRYAGCSMCLGMNDDKANSGQRVASTSNRNFVGRQGKGSITHLMSPASAAACAIEGVICDNRKYLGV</sequence>
<dbReference type="EC" id="4.2.1.33" evidence="1"/>
<dbReference type="EMBL" id="CP000814">
    <property type="protein sequence ID" value="ABV53220.1"/>
    <property type="molecule type" value="Genomic_DNA"/>
</dbReference>
<dbReference type="SMR" id="A8FP33"/>
<dbReference type="KEGG" id="cju:C8J_1623"/>
<dbReference type="HOGENOM" id="CLU_006714_3_4_7"/>
<dbReference type="UniPathway" id="UPA00048">
    <property type="reaction ID" value="UER00071"/>
</dbReference>
<dbReference type="GO" id="GO:0003861">
    <property type="term" value="F:3-isopropylmalate dehydratase activity"/>
    <property type="evidence" value="ECO:0007669"/>
    <property type="project" value="UniProtKB-UniRule"/>
</dbReference>
<dbReference type="GO" id="GO:0051539">
    <property type="term" value="F:4 iron, 4 sulfur cluster binding"/>
    <property type="evidence" value="ECO:0007669"/>
    <property type="project" value="UniProtKB-KW"/>
</dbReference>
<dbReference type="GO" id="GO:0046872">
    <property type="term" value="F:metal ion binding"/>
    <property type="evidence" value="ECO:0007669"/>
    <property type="project" value="UniProtKB-KW"/>
</dbReference>
<dbReference type="GO" id="GO:0009098">
    <property type="term" value="P:L-leucine biosynthetic process"/>
    <property type="evidence" value="ECO:0007669"/>
    <property type="project" value="UniProtKB-UniRule"/>
</dbReference>
<dbReference type="CDD" id="cd01583">
    <property type="entry name" value="IPMI"/>
    <property type="match status" value="1"/>
</dbReference>
<dbReference type="Gene3D" id="3.30.499.10">
    <property type="entry name" value="Aconitase, domain 3"/>
    <property type="match status" value="2"/>
</dbReference>
<dbReference type="HAMAP" id="MF_01026">
    <property type="entry name" value="LeuC_type1"/>
    <property type="match status" value="1"/>
</dbReference>
<dbReference type="InterPro" id="IPR004430">
    <property type="entry name" value="3-IsopropMal_deHydase_lsu"/>
</dbReference>
<dbReference type="InterPro" id="IPR015931">
    <property type="entry name" value="Acnase/IPM_dHydase_lsu_aba_1/3"/>
</dbReference>
<dbReference type="InterPro" id="IPR001030">
    <property type="entry name" value="Acoase/IPM_deHydtase_lsu_aba"/>
</dbReference>
<dbReference type="InterPro" id="IPR018136">
    <property type="entry name" value="Aconitase_4Fe-4S_BS"/>
</dbReference>
<dbReference type="InterPro" id="IPR036008">
    <property type="entry name" value="Aconitase_4Fe-4S_dom"/>
</dbReference>
<dbReference type="InterPro" id="IPR050067">
    <property type="entry name" value="IPM_dehydratase_rel_enz"/>
</dbReference>
<dbReference type="InterPro" id="IPR033941">
    <property type="entry name" value="IPMI_cat"/>
</dbReference>
<dbReference type="NCBIfam" id="TIGR00170">
    <property type="entry name" value="leuC"/>
    <property type="match status" value="1"/>
</dbReference>
<dbReference type="NCBIfam" id="NF004016">
    <property type="entry name" value="PRK05478.1"/>
    <property type="match status" value="1"/>
</dbReference>
<dbReference type="NCBIfam" id="NF009116">
    <property type="entry name" value="PRK12466.1"/>
    <property type="match status" value="1"/>
</dbReference>
<dbReference type="PANTHER" id="PTHR43822:SF9">
    <property type="entry name" value="3-ISOPROPYLMALATE DEHYDRATASE"/>
    <property type="match status" value="1"/>
</dbReference>
<dbReference type="PANTHER" id="PTHR43822">
    <property type="entry name" value="HOMOACONITASE, MITOCHONDRIAL-RELATED"/>
    <property type="match status" value="1"/>
</dbReference>
<dbReference type="Pfam" id="PF00330">
    <property type="entry name" value="Aconitase"/>
    <property type="match status" value="1"/>
</dbReference>
<dbReference type="PRINTS" id="PR00415">
    <property type="entry name" value="ACONITASE"/>
</dbReference>
<dbReference type="SUPFAM" id="SSF53732">
    <property type="entry name" value="Aconitase iron-sulfur domain"/>
    <property type="match status" value="1"/>
</dbReference>
<dbReference type="PROSITE" id="PS00450">
    <property type="entry name" value="ACONITASE_1"/>
    <property type="match status" value="1"/>
</dbReference>
<dbReference type="PROSITE" id="PS01244">
    <property type="entry name" value="ACONITASE_2"/>
    <property type="match status" value="1"/>
</dbReference>
<evidence type="ECO:0000255" key="1">
    <source>
        <dbReference type="HAMAP-Rule" id="MF_01026"/>
    </source>
</evidence>
<feature type="chain" id="PRO_1000072947" description="3-isopropylmalate dehydratase large subunit">
    <location>
        <begin position="1"/>
        <end position="468"/>
    </location>
</feature>
<feature type="binding site" evidence="1">
    <location>
        <position position="347"/>
    </location>
    <ligand>
        <name>[4Fe-4S] cluster</name>
        <dbReference type="ChEBI" id="CHEBI:49883"/>
    </ligand>
</feature>
<feature type="binding site" evidence="1">
    <location>
        <position position="407"/>
    </location>
    <ligand>
        <name>[4Fe-4S] cluster</name>
        <dbReference type="ChEBI" id="CHEBI:49883"/>
    </ligand>
</feature>
<feature type="binding site" evidence="1">
    <location>
        <position position="410"/>
    </location>
    <ligand>
        <name>[4Fe-4S] cluster</name>
        <dbReference type="ChEBI" id="CHEBI:49883"/>
    </ligand>
</feature>
<accession>A8FP33</accession>
<organism>
    <name type="scientific">Campylobacter jejuni subsp. jejuni serotype O:6 (strain 81116 / NCTC 11828)</name>
    <dbReference type="NCBI Taxonomy" id="407148"/>
    <lineage>
        <taxon>Bacteria</taxon>
        <taxon>Pseudomonadati</taxon>
        <taxon>Campylobacterota</taxon>
        <taxon>Epsilonproteobacteria</taxon>
        <taxon>Campylobacterales</taxon>
        <taxon>Campylobacteraceae</taxon>
        <taxon>Campylobacter</taxon>
    </lineage>
</organism>